<protein>
    <recommendedName>
        <fullName evidence="3">KH domain-containing RNA-binding protein QKI</fullName>
    </recommendedName>
    <alternativeName>
        <fullName evidence="6">Protein quaking</fullName>
        <shortName evidence="6">RqkI</shortName>
    </alternativeName>
</protein>
<sequence length="341" mass="37643">MVGEMETKENPNPTPDYLMQLMNDKKLMSSLPNFCGIFNHLERLLDEEISRVRKDMYNDTLNGSTEKRSAELPDAVGPIVQLQEKLYVPVKEYPDFNFVGRILGPRGLTAKQLEAETGCKIMVRGKGSMRDKKKEEQNRGKPNWEHLNEDLHVLITVEDAQNRAEIKLKRAVEEVKKLLVPAAEGEDSLKKMQLMELAILNGTYRDANIKSPALAFSLAATAQAAPRIITGPAPVLPPAALRTPTPAGPTIMPLIRQIQTAVMPNGTPHPTAAIVPPGPEAGLIYTPYEYPYTLAPATSILEYPIEPSGVLGAVATKVRRHDMRVHPYQRIVTADRAATGN</sequence>
<organism>
    <name type="scientific">Rattus norvegicus</name>
    <name type="common">Rat</name>
    <dbReference type="NCBI Taxonomy" id="10116"/>
    <lineage>
        <taxon>Eukaryota</taxon>
        <taxon>Metazoa</taxon>
        <taxon>Chordata</taxon>
        <taxon>Craniata</taxon>
        <taxon>Vertebrata</taxon>
        <taxon>Euteleostomi</taxon>
        <taxon>Mammalia</taxon>
        <taxon>Eutheria</taxon>
        <taxon>Euarchontoglires</taxon>
        <taxon>Glires</taxon>
        <taxon>Rodentia</taxon>
        <taxon>Myomorpha</taxon>
        <taxon>Muroidea</taxon>
        <taxon>Muridae</taxon>
        <taxon>Murinae</taxon>
        <taxon>Rattus</taxon>
    </lineage>
</organism>
<proteinExistence type="evidence at protein level"/>
<accession>Q91XU1</accession>
<feature type="chain" id="PRO_0000239376" description="KH domain-containing RNA-binding protein QKI">
    <location>
        <begin position="1"/>
        <end position="341"/>
    </location>
</feature>
<feature type="domain" description="KH">
    <location>
        <begin position="87"/>
        <end position="153"/>
    </location>
</feature>
<feature type="region of interest" description="Qua1 domain; involved in homodimerization" evidence="1">
    <location>
        <begin position="11"/>
        <end position="82"/>
    </location>
</feature>
<feature type="region of interest" description="Qua2 domain; involved in RNA binding" evidence="2">
    <location>
        <begin position="182"/>
        <end position="213"/>
    </location>
</feature>
<feature type="short sequence motif" description="SH3-binding">
    <location>
        <begin position="276"/>
        <end position="279"/>
    </location>
</feature>
<feature type="short sequence motif" description="Nuclear localization signal" evidence="3">
    <location>
        <begin position="324"/>
        <end position="330"/>
    </location>
</feature>
<feature type="site" description="Involved in RNA binding" evidence="2">
    <location>
        <position position="97"/>
    </location>
</feature>
<feature type="site" description="Involved in RNA binding" evidence="2">
    <location>
        <position position="120"/>
    </location>
</feature>
<feature type="site" description="Involved in RNA binding" evidence="2">
    <location>
        <position position="124"/>
    </location>
</feature>
<feature type="site" description="Involved in RNA binding" evidence="2">
    <location>
        <position position="130"/>
    </location>
</feature>
<feature type="site" description="Involved in RNA binding" evidence="2">
    <location>
        <position position="190"/>
    </location>
</feature>
<feature type="site" description="Involved in RNA binding" evidence="2">
    <location>
        <position position="193"/>
    </location>
</feature>
<feature type="modified residue" description="Phosphoserine" evidence="2">
    <location>
        <position position="188"/>
    </location>
</feature>
<feature type="modified residue" description="Omega-N-methylarginine" evidence="2">
    <location>
        <position position="227"/>
    </location>
</feature>
<feature type="modified residue" description="Asymmetric dimethylarginine; by CARM1; alternate" evidence="2">
    <location>
        <position position="242"/>
    </location>
</feature>
<feature type="modified residue" description="Omega-N-methylarginine; alternate" evidence="2">
    <location>
        <position position="242"/>
    </location>
</feature>
<feature type="modified residue" description="Omega-N-methylarginine" evidence="3">
    <location>
        <position position="256"/>
    </location>
</feature>
<name>QKI_RAT</name>
<comment type="function">
    <text evidence="2 3">RNA reader protein, which recognizes and binds specific RNAs, thereby regulating RNA metabolic processes, such as pre-mRNA splicing, circular RNA (circRNA) formation, mRNA export, mRNA stability and/or translation. Involved in various cellular processes, such as mRNA storage into stress granules, apoptosis, lipid deposition, interferon response, glial cell fate and development. Binds to the 5'-NACUAAY-N(1,20)-UAAY-3' RNA core sequence. Acts as a mRNA modification reader that specifically recognizes and binds mRNA transcripts modified by internal N(7)-methylguanine (m7G). Promotes the formation of circular RNAs (circRNAs) during the epithelial to mesenchymal transition and in cardiomyocytes: acts by binding to sites flanking circRNA-forming exons. CircRNAs are produced by back-splicing circularization of pre-mRNAs. Plays a central role in myelinization via 3 distinct mechanisms (By similarity). First, acts by protecting and promoting stability of target mRNAs such as MBP, SIRT2 and CDKN1B, which promotes oligodendrocyte differentiation. Second, participates in mRNA transport by regulating the nuclear export of MBP mRNA. Finally, indirectly regulates mRNA splicing of MAG pre-mRNA during oligodendrocyte differentiation by acting as a negative regulator of MAG exon 12 alternative splicing: acts by binding to HNRNPA1 mRNA splicing factor, preventing its translation. Involved in microglia differentiation and remyelination by regulating microexon alternative splicing of the Rho GTPase pathway (By similarity). Involved in macrophage differentiation: promotes monocyte differentiation by regulating pre-mRNA splicing in naive peripheral blood monocytes (By similarity). Acts as an important regulator of muscle development: required for the contractile function of cardiomyocytes by regulating alternative splicing of cardiomyocyte transcripts. Acts as a negative regulator of thermogenesis by decreasing stability, nuclear export and translation of mRNAs encoding PPARGC1A and UCP1. Also required for visceral endoderm function and blood vessel development (By similarity). May also play a role in smooth muscle development (By similarity). In addition to its RNA-binding activity, also acts as a nuclear transcription coactivator for SREBF2/SREBP2 (By similarity).</text>
</comment>
<comment type="subunit">
    <text evidence="2 3">Homodimer; does not require RNA to homodimerize (By similarity). Able to heterodimerize with BICC1 (By similarity).</text>
</comment>
<comment type="subcellular location">
    <subcellularLocation>
        <location evidence="2">Nucleus</location>
    </subcellularLocation>
    <subcellularLocation>
        <location evidence="4">Cytoplasm</location>
    </subcellularLocation>
</comment>
<comment type="tissue specificity">
    <text evidence="4">Present in myelinating oligodendrocytes (at protein level).</text>
</comment>
<comment type="domain">
    <text evidence="2">The KH domain and the Qua2 region are involved in RNA binding.</text>
</comment>
<comment type="PTM">
    <text evidence="3">Methylated by PRMT1.</text>
</comment>
<comment type="PTM">
    <text evidence="3">Tyrosine phosphorylated at its C-terminus, probably by FYN. Phosphorylation leads to decreased mRNA-binding affinity, affecting transport and/or stabilization of MBP mRNA (By similarity).</text>
</comment>
<comment type="PTM">
    <text evidence="3">Ubiquitinated by RNF6 in macrophages, leading to its degradation.</text>
</comment>
<comment type="similarity">
    <text evidence="5">Belongs to the quaking family.</text>
</comment>
<evidence type="ECO:0000250" key="1">
    <source>
        <dbReference type="UniProtKB" id="Q17339"/>
    </source>
</evidence>
<evidence type="ECO:0000250" key="2">
    <source>
        <dbReference type="UniProtKB" id="Q96PU8"/>
    </source>
</evidence>
<evidence type="ECO:0000250" key="3">
    <source>
        <dbReference type="UniProtKB" id="Q9QYS9"/>
    </source>
</evidence>
<evidence type="ECO:0000269" key="4">
    <source>
    </source>
</evidence>
<evidence type="ECO:0000305" key="5"/>
<evidence type="ECO:0000312" key="6">
    <source>
        <dbReference type="RGD" id="1584886"/>
    </source>
</evidence>
<reference key="1">
    <citation type="journal article" date="2004" name="Nature">
        <title>Genome sequence of the Brown Norway rat yields insights into mammalian evolution.</title>
        <authorList>
            <person name="Gibbs R.A."/>
            <person name="Weinstock G.M."/>
            <person name="Metzker M.L."/>
            <person name="Muzny D.M."/>
            <person name="Sodergren E.J."/>
            <person name="Scherer S."/>
            <person name="Scott G."/>
            <person name="Steffen D."/>
            <person name="Worley K.C."/>
            <person name="Burch P.E."/>
            <person name="Okwuonu G."/>
            <person name="Hines S."/>
            <person name="Lewis L."/>
            <person name="Deramo C."/>
            <person name="Delgado O."/>
            <person name="Dugan-Rocha S."/>
            <person name="Miner G."/>
            <person name="Morgan M."/>
            <person name="Hawes A."/>
            <person name="Gill R."/>
            <person name="Holt R.A."/>
            <person name="Adams M.D."/>
            <person name="Amanatides P.G."/>
            <person name="Baden-Tillson H."/>
            <person name="Barnstead M."/>
            <person name="Chin S."/>
            <person name="Evans C.A."/>
            <person name="Ferriera S."/>
            <person name="Fosler C."/>
            <person name="Glodek A."/>
            <person name="Gu Z."/>
            <person name="Jennings D."/>
            <person name="Kraft C.L."/>
            <person name="Nguyen T."/>
            <person name="Pfannkoch C.M."/>
            <person name="Sitter C."/>
            <person name="Sutton G.G."/>
            <person name="Venter J.C."/>
            <person name="Woodage T."/>
            <person name="Smith D."/>
            <person name="Lee H.-M."/>
            <person name="Gustafson E."/>
            <person name="Cahill P."/>
            <person name="Kana A."/>
            <person name="Doucette-Stamm L."/>
            <person name="Weinstock K."/>
            <person name="Fechtel K."/>
            <person name="Weiss R.B."/>
            <person name="Dunn D.M."/>
            <person name="Green E.D."/>
            <person name="Blakesley R.W."/>
            <person name="Bouffard G.G."/>
            <person name="De Jong P.J."/>
            <person name="Osoegawa K."/>
            <person name="Zhu B."/>
            <person name="Marra M."/>
            <person name="Schein J."/>
            <person name="Bosdet I."/>
            <person name="Fjell C."/>
            <person name="Jones S."/>
            <person name="Krzywinski M."/>
            <person name="Mathewson C."/>
            <person name="Siddiqui A."/>
            <person name="Wye N."/>
            <person name="McPherson J."/>
            <person name="Zhao S."/>
            <person name="Fraser C.M."/>
            <person name="Shetty J."/>
            <person name="Shatsman S."/>
            <person name="Geer K."/>
            <person name="Chen Y."/>
            <person name="Abramzon S."/>
            <person name="Nierman W.C."/>
            <person name="Havlak P.H."/>
            <person name="Chen R."/>
            <person name="Durbin K.J."/>
            <person name="Egan A."/>
            <person name="Ren Y."/>
            <person name="Song X.-Z."/>
            <person name="Li B."/>
            <person name="Liu Y."/>
            <person name="Qin X."/>
            <person name="Cawley S."/>
            <person name="Cooney A.J."/>
            <person name="D'Souza L.M."/>
            <person name="Martin K."/>
            <person name="Wu J.Q."/>
            <person name="Gonzalez-Garay M.L."/>
            <person name="Jackson A.R."/>
            <person name="Kalafus K.J."/>
            <person name="McLeod M.P."/>
            <person name="Milosavljevic A."/>
            <person name="Virk D."/>
            <person name="Volkov A."/>
            <person name="Wheeler D.A."/>
            <person name="Zhang Z."/>
            <person name="Bailey J.A."/>
            <person name="Eichler E.E."/>
            <person name="Tuzun E."/>
            <person name="Birney E."/>
            <person name="Mongin E."/>
            <person name="Ureta-Vidal A."/>
            <person name="Woodwark C."/>
            <person name="Zdobnov E."/>
            <person name="Bork P."/>
            <person name="Suyama M."/>
            <person name="Torrents D."/>
            <person name="Alexandersson M."/>
            <person name="Trask B.J."/>
            <person name="Young J.M."/>
            <person name="Huang H."/>
            <person name="Wang H."/>
            <person name="Xing H."/>
            <person name="Daniels S."/>
            <person name="Gietzen D."/>
            <person name="Schmidt J."/>
            <person name="Stevens K."/>
            <person name="Vitt U."/>
            <person name="Wingrove J."/>
            <person name="Camara F."/>
            <person name="Mar Alba M."/>
            <person name="Abril J.F."/>
            <person name="Guigo R."/>
            <person name="Smit A."/>
            <person name="Dubchak I."/>
            <person name="Rubin E.M."/>
            <person name="Couronne O."/>
            <person name="Poliakov A."/>
            <person name="Huebner N."/>
            <person name="Ganten D."/>
            <person name="Goesele C."/>
            <person name="Hummel O."/>
            <person name="Kreitler T."/>
            <person name="Lee Y.-A."/>
            <person name="Monti J."/>
            <person name="Schulz H."/>
            <person name="Zimdahl H."/>
            <person name="Himmelbauer H."/>
            <person name="Lehrach H."/>
            <person name="Jacob H.J."/>
            <person name="Bromberg S."/>
            <person name="Gullings-Handley J."/>
            <person name="Jensen-Seaman M.I."/>
            <person name="Kwitek A.E."/>
            <person name="Lazar J."/>
            <person name="Pasko D."/>
            <person name="Tonellato P.J."/>
            <person name="Twigger S."/>
            <person name="Ponting C.P."/>
            <person name="Duarte J.M."/>
            <person name="Rice S."/>
            <person name="Goodstadt L."/>
            <person name="Beatson S.A."/>
            <person name="Emes R.D."/>
            <person name="Winter E.E."/>
            <person name="Webber C."/>
            <person name="Brandt P."/>
            <person name="Nyakatura G."/>
            <person name="Adetobi M."/>
            <person name="Chiaromonte F."/>
            <person name="Elnitski L."/>
            <person name="Eswara P."/>
            <person name="Hardison R.C."/>
            <person name="Hou M."/>
            <person name="Kolbe D."/>
            <person name="Makova K."/>
            <person name="Miller W."/>
            <person name="Nekrutenko A."/>
            <person name="Riemer C."/>
            <person name="Schwartz S."/>
            <person name="Taylor J."/>
            <person name="Yang S."/>
            <person name="Zhang Y."/>
            <person name="Lindpaintner K."/>
            <person name="Andrews T.D."/>
            <person name="Caccamo M."/>
            <person name="Clamp M."/>
            <person name="Clarke L."/>
            <person name="Curwen V."/>
            <person name="Durbin R.M."/>
            <person name="Eyras E."/>
            <person name="Searle S.M."/>
            <person name="Cooper G.M."/>
            <person name="Batzoglou S."/>
            <person name="Brudno M."/>
            <person name="Sidow A."/>
            <person name="Stone E.A."/>
            <person name="Payseur B.A."/>
            <person name="Bourque G."/>
            <person name="Lopez-Otin C."/>
            <person name="Puente X.S."/>
            <person name="Chakrabarti K."/>
            <person name="Chatterji S."/>
            <person name="Dewey C."/>
            <person name="Pachter L."/>
            <person name="Bray N."/>
            <person name="Yap V.B."/>
            <person name="Caspi A."/>
            <person name="Tesler G."/>
            <person name="Pevzner P.A."/>
            <person name="Haussler D."/>
            <person name="Roskin K.M."/>
            <person name="Baertsch R."/>
            <person name="Clawson H."/>
            <person name="Furey T.S."/>
            <person name="Hinrichs A.S."/>
            <person name="Karolchik D."/>
            <person name="Kent W.J."/>
            <person name="Rosenbloom K.R."/>
            <person name="Trumbower H."/>
            <person name="Weirauch M."/>
            <person name="Cooper D.N."/>
            <person name="Stenson P.D."/>
            <person name="Ma B."/>
            <person name="Brent M."/>
            <person name="Arumugam M."/>
            <person name="Shteynberg D."/>
            <person name="Copley R.R."/>
            <person name="Taylor M.S."/>
            <person name="Riethman H."/>
            <person name="Mudunuri U."/>
            <person name="Peterson J."/>
            <person name="Guyer M."/>
            <person name="Felsenfeld A."/>
            <person name="Old S."/>
            <person name="Mockrin S."/>
            <person name="Collins F.S."/>
        </authorList>
    </citation>
    <scope>NUCLEOTIDE SEQUENCE [LARGE SCALE GENOMIC DNA]</scope>
    <source>
        <strain>Brown Norway</strain>
    </source>
</reference>
<reference key="2">
    <citation type="submission" date="2001-01" db="EMBL/GenBank/DDBJ databases">
        <title>Differentially expressed genes.</title>
        <authorList>
            <person name="Leng S."/>
            <person name="Tsutsumi M."/>
            <person name="Takase S."/>
            <person name="Abe S."/>
            <person name="Yamamoto Y."/>
            <person name="Fukunaga T."/>
            <person name="Saijoh K."/>
        </authorList>
    </citation>
    <scope>NUCLEOTIDE SEQUENCE [MRNA] OF 98-302</scope>
    <source>
        <tissue>Brain</tissue>
    </source>
</reference>
<reference key="3">
    <citation type="journal article" date="2001" name="Mol. Cell. Neurosci.">
        <title>Expression of QKI proteins and MAP1B identifies actively myelinating oligodendrocytes in adult rat brain.</title>
        <authorList>
            <person name="Wu H.Y."/>
            <person name="Dawson M.R.L."/>
            <person name="Reynolds R."/>
            <person name="Hardy R.J."/>
        </authorList>
    </citation>
    <scope>SUBCELLULAR LOCATION</scope>
    <scope>TISSUE SPECIFICITY</scope>
</reference>
<keyword id="KW-0963">Cytoplasm</keyword>
<keyword id="KW-0217">Developmental protein</keyword>
<keyword id="KW-0221">Differentiation</keyword>
<keyword id="KW-0238">DNA-binding</keyword>
<keyword id="KW-0488">Methylation</keyword>
<keyword id="KW-0507">mRNA processing</keyword>
<keyword id="KW-0508">mRNA splicing</keyword>
<keyword id="KW-0509">mRNA transport</keyword>
<keyword id="KW-0539">Nucleus</keyword>
<keyword id="KW-0597">Phosphoprotein</keyword>
<keyword id="KW-1185">Reference proteome</keyword>
<keyword id="KW-0694">RNA-binding</keyword>
<keyword id="KW-0729">SH3-binding</keyword>
<keyword id="KW-0810">Translation regulation</keyword>
<keyword id="KW-0813">Transport</keyword>
<keyword id="KW-0832">Ubl conjugation</keyword>
<gene>
    <name evidence="6" type="primary">Qki</name>
    <name evidence="6" type="synonym">Qk</name>
</gene>
<dbReference type="EMBL" id="AABR03000138">
    <property type="status" value="NOT_ANNOTATED_CDS"/>
    <property type="molecule type" value="Genomic_DNA"/>
</dbReference>
<dbReference type="EMBL" id="AB054997">
    <property type="protein sequence ID" value="BAB62175.1"/>
    <property type="molecule type" value="mRNA"/>
</dbReference>
<dbReference type="SMR" id="Q91XU1"/>
<dbReference type="FunCoup" id="Q91XU1">
    <property type="interactions" value="3353"/>
</dbReference>
<dbReference type="STRING" id="10116.ENSRNOP00000070460"/>
<dbReference type="GlyGen" id="Q91XU1">
    <property type="glycosylation" value="1 site"/>
</dbReference>
<dbReference type="iPTMnet" id="Q91XU1"/>
<dbReference type="PhosphoSitePlus" id="Q91XU1"/>
<dbReference type="jPOST" id="Q91XU1"/>
<dbReference type="PaxDb" id="10116-ENSRNOP00000034413"/>
<dbReference type="ABCD" id="Q91XU1">
    <property type="antibodies" value="4 sequenced antibodies"/>
</dbReference>
<dbReference type="AGR" id="RGD:1584886"/>
<dbReference type="RGD" id="1584886">
    <property type="gene designation" value="Qki"/>
</dbReference>
<dbReference type="eggNOG" id="KOG1588">
    <property type="taxonomic scope" value="Eukaryota"/>
</dbReference>
<dbReference type="InParanoid" id="Q91XU1"/>
<dbReference type="PhylomeDB" id="Q91XU1"/>
<dbReference type="PRO" id="PR:Q91XU1"/>
<dbReference type="Proteomes" id="UP000002494">
    <property type="component" value="Unplaced"/>
</dbReference>
<dbReference type="GO" id="GO:0005737">
    <property type="term" value="C:cytoplasm"/>
    <property type="evidence" value="ECO:0000266"/>
    <property type="project" value="RGD"/>
</dbReference>
<dbReference type="GO" id="GO:0005829">
    <property type="term" value="C:cytosol"/>
    <property type="evidence" value="ECO:0000266"/>
    <property type="project" value="RGD"/>
</dbReference>
<dbReference type="GO" id="GO:0005634">
    <property type="term" value="C:nucleus"/>
    <property type="evidence" value="ECO:0000266"/>
    <property type="project" value="RGD"/>
</dbReference>
<dbReference type="GO" id="GO:0045202">
    <property type="term" value="C:synapse"/>
    <property type="evidence" value="ECO:0000266"/>
    <property type="project" value="RGD"/>
</dbReference>
<dbReference type="GO" id="GO:0003677">
    <property type="term" value="F:DNA binding"/>
    <property type="evidence" value="ECO:0007669"/>
    <property type="project" value="UniProtKB-KW"/>
</dbReference>
<dbReference type="GO" id="GO:0160089">
    <property type="term" value="F:internal N(7)-methylguanine-containing RNA reader activity"/>
    <property type="evidence" value="ECO:0000266"/>
    <property type="project" value="RGD"/>
</dbReference>
<dbReference type="GO" id="GO:0035198">
    <property type="term" value="F:miRNA binding"/>
    <property type="evidence" value="ECO:0000250"/>
    <property type="project" value="UniProtKB"/>
</dbReference>
<dbReference type="GO" id="GO:0003730">
    <property type="term" value="F:mRNA 3'-UTR binding"/>
    <property type="evidence" value="ECO:0000266"/>
    <property type="project" value="RGD"/>
</dbReference>
<dbReference type="GO" id="GO:0003729">
    <property type="term" value="F:mRNA binding"/>
    <property type="evidence" value="ECO:0000266"/>
    <property type="project" value="RGD"/>
</dbReference>
<dbReference type="GO" id="GO:0017124">
    <property type="term" value="F:SH3 domain binding"/>
    <property type="evidence" value="ECO:0007669"/>
    <property type="project" value="UniProtKB-KW"/>
</dbReference>
<dbReference type="GO" id="GO:0008366">
    <property type="term" value="P:axon ensheathment"/>
    <property type="evidence" value="ECO:0000266"/>
    <property type="project" value="RGD"/>
</dbReference>
<dbReference type="GO" id="GO:0008298">
    <property type="term" value="P:intracellular mRNA localization"/>
    <property type="evidence" value="ECO:0000266"/>
    <property type="project" value="RGD"/>
</dbReference>
<dbReference type="GO" id="GO:0042759">
    <property type="term" value="P:long-chain fatty acid biosynthetic process"/>
    <property type="evidence" value="ECO:0000266"/>
    <property type="project" value="RGD"/>
</dbReference>
<dbReference type="GO" id="GO:0014004">
    <property type="term" value="P:microglia differentiation"/>
    <property type="evidence" value="ECO:0000250"/>
    <property type="project" value="UniProtKB"/>
</dbReference>
<dbReference type="GO" id="GO:0006397">
    <property type="term" value="P:mRNA processing"/>
    <property type="evidence" value="ECO:0000315"/>
    <property type="project" value="RGD"/>
</dbReference>
<dbReference type="GO" id="GO:0048255">
    <property type="term" value="P:mRNA stabilization"/>
    <property type="evidence" value="ECO:0000315"/>
    <property type="project" value="RGD"/>
</dbReference>
<dbReference type="GO" id="GO:0051028">
    <property type="term" value="P:mRNA transport"/>
    <property type="evidence" value="ECO:0000266"/>
    <property type="project" value="RGD"/>
</dbReference>
<dbReference type="GO" id="GO:0042552">
    <property type="term" value="P:myelination"/>
    <property type="evidence" value="ECO:0000266"/>
    <property type="project" value="RGD"/>
</dbReference>
<dbReference type="GO" id="GO:1990764">
    <property type="term" value="P:myofibroblast contraction"/>
    <property type="evidence" value="ECO:0000266"/>
    <property type="project" value="RGD"/>
</dbReference>
<dbReference type="GO" id="GO:1905869">
    <property type="term" value="P:negative regulation of 3'-UTR-mediated mRNA stabilization"/>
    <property type="evidence" value="ECO:0000250"/>
    <property type="project" value="UniProtKB"/>
</dbReference>
<dbReference type="GO" id="GO:0010667">
    <property type="term" value="P:negative regulation of cardiac muscle cell apoptotic process"/>
    <property type="evidence" value="ECO:0000315"/>
    <property type="project" value="RGD"/>
</dbReference>
<dbReference type="GO" id="GO:0120163">
    <property type="term" value="P:negative regulation of cold-induced thermogenesis"/>
    <property type="evidence" value="ECO:0000250"/>
    <property type="project" value="UniProtKB"/>
</dbReference>
<dbReference type="GO" id="GO:0045650">
    <property type="term" value="P:negative regulation of macrophage differentiation"/>
    <property type="evidence" value="ECO:0000250"/>
    <property type="project" value="UniProtKB"/>
</dbReference>
<dbReference type="GO" id="GO:2000626">
    <property type="term" value="P:negative regulation of miRNA catabolic process"/>
    <property type="evidence" value="ECO:0000250"/>
    <property type="project" value="UniProtKB"/>
</dbReference>
<dbReference type="GO" id="GO:0017148">
    <property type="term" value="P:negative regulation of translation"/>
    <property type="evidence" value="ECO:0000250"/>
    <property type="project" value="UniProtKB"/>
</dbReference>
<dbReference type="GO" id="GO:0010628">
    <property type="term" value="P:positive regulation of gene expression"/>
    <property type="evidence" value="ECO:0000266"/>
    <property type="project" value="RGD"/>
</dbReference>
<dbReference type="GO" id="GO:0010976">
    <property type="term" value="P:positive regulation of neuron projection development"/>
    <property type="evidence" value="ECO:0000315"/>
    <property type="project" value="RGD"/>
</dbReference>
<dbReference type="GO" id="GO:0048714">
    <property type="term" value="P:positive regulation of oligodendrocyte differentiation"/>
    <property type="evidence" value="ECO:0000315"/>
    <property type="project" value="RGD"/>
</dbReference>
<dbReference type="GO" id="GO:0048710">
    <property type="term" value="P:regulation of astrocyte differentiation"/>
    <property type="evidence" value="ECO:0000250"/>
    <property type="project" value="UniProtKB"/>
</dbReference>
<dbReference type="GO" id="GO:0010717">
    <property type="term" value="P:regulation of epithelial to mesenchymal transition"/>
    <property type="evidence" value="ECO:0000250"/>
    <property type="project" value="UniProtKB"/>
</dbReference>
<dbReference type="GO" id="GO:0045649">
    <property type="term" value="P:regulation of macrophage differentiation"/>
    <property type="evidence" value="ECO:0000266"/>
    <property type="project" value="RGD"/>
</dbReference>
<dbReference type="GO" id="GO:0048024">
    <property type="term" value="P:regulation of mRNA splicing, via spliceosome"/>
    <property type="evidence" value="ECO:0000250"/>
    <property type="project" value="UniProtKB"/>
</dbReference>
<dbReference type="GO" id="GO:0007286">
    <property type="term" value="P:spermatid development"/>
    <property type="evidence" value="ECO:0000266"/>
    <property type="project" value="RGD"/>
</dbReference>
<dbReference type="GO" id="GO:0160091">
    <property type="term" value="P:spliceosome-depend formation of circular RNA"/>
    <property type="evidence" value="ECO:0000250"/>
    <property type="project" value="UniProtKB"/>
</dbReference>
<dbReference type="GO" id="GO:0035886">
    <property type="term" value="P:vascular associated smooth muscle cell differentiation"/>
    <property type="evidence" value="ECO:0000250"/>
    <property type="project" value="UniProtKB"/>
</dbReference>
<dbReference type="GO" id="GO:0001570">
    <property type="term" value="P:vasculogenesis"/>
    <property type="evidence" value="ECO:0000266"/>
    <property type="project" value="RGD"/>
</dbReference>
<dbReference type="CDD" id="cd22465">
    <property type="entry name" value="KH-I_Hqk"/>
    <property type="match status" value="1"/>
</dbReference>
<dbReference type="FunFam" id="1.20.5.4010:FF:000001">
    <property type="entry name" value="protein quaking isoform X1"/>
    <property type="match status" value="1"/>
</dbReference>
<dbReference type="FunFam" id="3.30.1370.10:FF:000055">
    <property type="entry name" value="protein quaking isoform X1"/>
    <property type="match status" value="1"/>
</dbReference>
<dbReference type="Gene3D" id="1.20.5.4010">
    <property type="match status" value="1"/>
</dbReference>
<dbReference type="Gene3D" id="3.30.1370.10">
    <property type="entry name" value="K Homology domain, type 1"/>
    <property type="match status" value="1"/>
</dbReference>
<dbReference type="InterPro" id="IPR045071">
    <property type="entry name" value="BBP-like"/>
</dbReference>
<dbReference type="InterPro" id="IPR055256">
    <property type="entry name" value="KH_1_KHDC4/BBP-like"/>
</dbReference>
<dbReference type="InterPro" id="IPR004087">
    <property type="entry name" value="KH_dom"/>
</dbReference>
<dbReference type="InterPro" id="IPR036612">
    <property type="entry name" value="KH_dom_type_1_sf"/>
</dbReference>
<dbReference type="InterPro" id="IPR032367">
    <property type="entry name" value="Quaking_NLS"/>
</dbReference>
<dbReference type="InterPro" id="IPR032377">
    <property type="entry name" value="STAR_dimer"/>
</dbReference>
<dbReference type="PANTHER" id="PTHR11208:SF125">
    <property type="entry name" value="KH DOMAIN-CONTAINING RNA-BINDING PROTEIN QKI"/>
    <property type="match status" value="1"/>
</dbReference>
<dbReference type="PANTHER" id="PTHR11208">
    <property type="entry name" value="RNA-BINDING PROTEIN RELATED"/>
    <property type="match status" value="1"/>
</dbReference>
<dbReference type="Pfam" id="PF22675">
    <property type="entry name" value="KH-I_KHDC4-BBP"/>
    <property type="match status" value="1"/>
</dbReference>
<dbReference type="Pfam" id="PF16551">
    <property type="entry name" value="Quaking_NLS"/>
    <property type="match status" value="1"/>
</dbReference>
<dbReference type="Pfam" id="PF16544">
    <property type="entry name" value="STAR_dimer"/>
    <property type="match status" value="1"/>
</dbReference>
<dbReference type="SMART" id="SM00322">
    <property type="entry name" value="KH"/>
    <property type="match status" value="1"/>
</dbReference>
<dbReference type="SUPFAM" id="SSF54791">
    <property type="entry name" value="Eukaryotic type KH-domain (KH-domain type I)"/>
    <property type="match status" value="1"/>
</dbReference>